<feature type="chain" id="PRO_1000120107" description="Large ribosomal subunit protein bL32">
    <location>
        <begin position="1"/>
        <end position="55"/>
    </location>
</feature>
<feature type="region of interest" description="Disordered" evidence="2">
    <location>
        <begin position="1"/>
        <end position="22"/>
    </location>
</feature>
<feature type="compositionally biased region" description="Basic residues" evidence="2">
    <location>
        <begin position="1"/>
        <end position="19"/>
    </location>
</feature>
<organism>
    <name type="scientific">Corynebacterium urealyticum (strain ATCC 43042 / DSM 7109)</name>
    <dbReference type="NCBI Taxonomy" id="504474"/>
    <lineage>
        <taxon>Bacteria</taxon>
        <taxon>Bacillati</taxon>
        <taxon>Actinomycetota</taxon>
        <taxon>Actinomycetes</taxon>
        <taxon>Mycobacteriales</taxon>
        <taxon>Corynebacteriaceae</taxon>
        <taxon>Corynebacterium</taxon>
    </lineage>
</organism>
<reference key="1">
    <citation type="journal article" date="2008" name="J. Biotechnol.">
        <title>The lifestyle of Corynebacterium urealyticum derived from its complete genome sequence established by pyrosequencing.</title>
        <authorList>
            <person name="Tauch A."/>
            <person name="Trost E."/>
            <person name="Tilker A."/>
            <person name="Ludewig U."/>
            <person name="Schneiker S."/>
            <person name="Goesmann A."/>
            <person name="Arnold W."/>
            <person name="Bekel T."/>
            <person name="Brinkrolf K."/>
            <person name="Brune I."/>
            <person name="Goetker S."/>
            <person name="Kalinowski J."/>
            <person name="Kamp P.-B."/>
            <person name="Lobo F.P."/>
            <person name="Viehoever P."/>
            <person name="Weisshaar B."/>
            <person name="Soriano F."/>
            <person name="Droege M."/>
            <person name="Puehler A."/>
        </authorList>
    </citation>
    <scope>NUCLEOTIDE SEQUENCE [LARGE SCALE GENOMIC DNA]</scope>
    <source>
        <strain>ATCC 43042 / DSM 7109</strain>
    </source>
</reference>
<keyword id="KW-1185">Reference proteome</keyword>
<keyword id="KW-0687">Ribonucleoprotein</keyword>
<keyword id="KW-0689">Ribosomal protein</keyword>
<proteinExistence type="inferred from homology"/>
<dbReference type="EMBL" id="AM942444">
    <property type="protein sequence ID" value="CAQ04504.1"/>
    <property type="molecule type" value="Genomic_DNA"/>
</dbReference>
<dbReference type="RefSeq" id="WP_012359796.1">
    <property type="nucleotide sequence ID" value="NC_010545.1"/>
</dbReference>
<dbReference type="SMR" id="B1VFG5"/>
<dbReference type="STRING" id="504474.cu0544"/>
<dbReference type="GeneID" id="60605344"/>
<dbReference type="KEGG" id="cur:cu0544"/>
<dbReference type="eggNOG" id="ENOG5033AVR">
    <property type="taxonomic scope" value="Bacteria"/>
</dbReference>
<dbReference type="HOGENOM" id="CLU_203263_0_0_11"/>
<dbReference type="Proteomes" id="UP000001727">
    <property type="component" value="Chromosome"/>
</dbReference>
<dbReference type="GO" id="GO:0015934">
    <property type="term" value="C:large ribosomal subunit"/>
    <property type="evidence" value="ECO:0007669"/>
    <property type="project" value="InterPro"/>
</dbReference>
<dbReference type="GO" id="GO:0003735">
    <property type="term" value="F:structural constituent of ribosome"/>
    <property type="evidence" value="ECO:0007669"/>
    <property type="project" value="InterPro"/>
</dbReference>
<dbReference type="GO" id="GO:0006412">
    <property type="term" value="P:translation"/>
    <property type="evidence" value="ECO:0007669"/>
    <property type="project" value="UniProtKB-UniRule"/>
</dbReference>
<dbReference type="HAMAP" id="MF_00340">
    <property type="entry name" value="Ribosomal_bL32"/>
    <property type="match status" value="1"/>
</dbReference>
<dbReference type="InterPro" id="IPR002677">
    <property type="entry name" value="Ribosomal_bL32"/>
</dbReference>
<dbReference type="InterPro" id="IPR011332">
    <property type="entry name" value="Ribosomal_zn-bd"/>
</dbReference>
<dbReference type="NCBIfam" id="TIGR01031">
    <property type="entry name" value="rpmF_bact"/>
    <property type="match status" value="1"/>
</dbReference>
<dbReference type="Pfam" id="PF01783">
    <property type="entry name" value="Ribosomal_L32p"/>
    <property type="match status" value="1"/>
</dbReference>
<dbReference type="SUPFAM" id="SSF57829">
    <property type="entry name" value="Zn-binding ribosomal proteins"/>
    <property type="match status" value="1"/>
</dbReference>
<comment type="similarity">
    <text evidence="1">Belongs to the bacterial ribosomal protein bL32 family.</text>
</comment>
<gene>
    <name evidence="1" type="primary">rpmF</name>
    <name type="ordered locus">cu0544</name>
</gene>
<name>RL32_CORU7</name>
<protein>
    <recommendedName>
        <fullName evidence="1">Large ribosomal subunit protein bL32</fullName>
    </recommendedName>
    <alternativeName>
        <fullName evidence="3">50S ribosomal protein L32</fullName>
    </alternativeName>
</protein>
<sequence>MAVPKFKKSRANTRARRSQWKADNVELQTQKINGQEVQIPRRLVKAAQLGLIDLD</sequence>
<evidence type="ECO:0000255" key="1">
    <source>
        <dbReference type="HAMAP-Rule" id="MF_00340"/>
    </source>
</evidence>
<evidence type="ECO:0000256" key="2">
    <source>
        <dbReference type="SAM" id="MobiDB-lite"/>
    </source>
</evidence>
<evidence type="ECO:0000305" key="3"/>
<accession>B1VFG5</accession>